<dbReference type="EC" id="1.4.4.2" evidence="1"/>
<dbReference type="EMBL" id="BX908798">
    <property type="protein sequence ID" value="CAF23007.1"/>
    <property type="molecule type" value="Genomic_DNA"/>
</dbReference>
<dbReference type="RefSeq" id="WP_011174833.1">
    <property type="nucleotide sequence ID" value="NC_005861.2"/>
</dbReference>
<dbReference type="SMR" id="Q6MEJ2"/>
<dbReference type="STRING" id="264201.pc0283"/>
<dbReference type="KEGG" id="pcu:PC_RS01375"/>
<dbReference type="eggNOG" id="COG0403">
    <property type="taxonomic scope" value="Bacteria"/>
</dbReference>
<dbReference type="HOGENOM" id="CLU_004620_0_2_0"/>
<dbReference type="OrthoDB" id="9771867at2"/>
<dbReference type="Proteomes" id="UP000000529">
    <property type="component" value="Chromosome"/>
</dbReference>
<dbReference type="GO" id="GO:0004375">
    <property type="term" value="F:glycine dehydrogenase (decarboxylating) activity"/>
    <property type="evidence" value="ECO:0007669"/>
    <property type="project" value="UniProtKB-EC"/>
</dbReference>
<dbReference type="GO" id="GO:0019464">
    <property type="term" value="P:glycine decarboxylation via glycine cleavage system"/>
    <property type="evidence" value="ECO:0007669"/>
    <property type="project" value="UniProtKB-UniRule"/>
</dbReference>
<dbReference type="GO" id="GO:0009116">
    <property type="term" value="P:nucleoside metabolic process"/>
    <property type="evidence" value="ECO:0007669"/>
    <property type="project" value="InterPro"/>
</dbReference>
<dbReference type="CDD" id="cd00613">
    <property type="entry name" value="GDC-P"/>
    <property type="match status" value="1"/>
</dbReference>
<dbReference type="Gene3D" id="3.90.1150.10">
    <property type="entry name" value="Aspartate Aminotransferase, domain 1"/>
    <property type="match status" value="1"/>
</dbReference>
<dbReference type="Gene3D" id="3.40.640.10">
    <property type="entry name" value="Type I PLP-dependent aspartate aminotransferase-like (Major domain)"/>
    <property type="match status" value="1"/>
</dbReference>
<dbReference type="HAMAP" id="MF_00712">
    <property type="entry name" value="GcvPA"/>
    <property type="match status" value="1"/>
</dbReference>
<dbReference type="InterPro" id="IPR023010">
    <property type="entry name" value="GcvPA"/>
</dbReference>
<dbReference type="InterPro" id="IPR049315">
    <property type="entry name" value="GDC-P_N"/>
</dbReference>
<dbReference type="InterPro" id="IPR020581">
    <property type="entry name" value="GDC_P"/>
</dbReference>
<dbReference type="InterPro" id="IPR015424">
    <property type="entry name" value="PyrdxlP-dep_Trfase"/>
</dbReference>
<dbReference type="InterPro" id="IPR015421">
    <property type="entry name" value="PyrdxlP-dep_Trfase_major"/>
</dbReference>
<dbReference type="InterPro" id="IPR015422">
    <property type="entry name" value="PyrdxlP-dep_Trfase_small"/>
</dbReference>
<dbReference type="NCBIfam" id="NF001696">
    <property type="entry name" value="PRK00451.1"/>
    <property type="match status" value="1"/>
</dbReference>
<dbReference type="PANTHER" id="PTHR42806">
    <property type="entry name" value="GLYCINE CLEAVAGE SYSTEM P-PROTEIN"/>
    <property type="match status" value="1"/>
</dbReference>
<dbReference type="PANTHER" id="PTHR42806:SF1">
    <property type="entry name" value="GLYCINE DEHYDROGENASE (DECARBOXYLATING)"/>
    <property type="match status" value="1"/>
</dbReference>
<dbReference type="Pfam" id="PF02347">
    <property type="entry name" value="GDC-P"/>
    <property type="match status" value="1"/>
</dbReference>
<dbReference type="PIRSF" id="PIRSF006815">
    <property type="entry name" value="GcvPA"/>
    <property type="match status" value="1"/>
</dbReference>
<dbReference type="SUPFAM" id="SSF53383">
    <property type="entry name" value="PLP-dependent transferases"/>
    <property type="match status" value="1"/>
</dbReference>
<protein>
    <recommendedName>
        <fullName evidence="1">Probable glycine dehydrogenase (decarboxylating) subunit 1</fullName>
        <ecNumber evidence="1">1.4.4.2</ecNumber>
    </recommendedName>
    <alternativeName>
        <fullName evidence="1">Glycine cleavage system P-protein subunit 1</fullName>
    </alternativeName>
    <alternativeName>
        <fullName evidence="1">Glycine decarboxylase subunit 1</fullName>
    </alternativeName>
    <alternativeName>
        <fullName evidence="1">Glycine dehydrogenase (aminomethyl-transferring) subunit 1</fullName>
    </alternativeName>
</protein>
<organism>
    <name type="scientific">Protochlamydia amoebophila (strain UWE25)</name>
    <dbReference type="NCBI Taxonomy" id="264201"/>
    <lineage>
        <taxon>Bacteria</taxon>
        <taxon>Pseudomonadati</taxon>
        <taxon>Chlamydiota</taxon>
        <taxon>Chlamydiia</taxon>
        <taxon>Parachlamydiales</taxon>
        <taxon>Parachlamydiaceae</taxon>
        <taxon>Candidatus Protochlamydia</taxon>
    </lineage>
</organism>
<accession>Q6MEJ2</accession>
<comment type="function">
    <text evidence="1">The glycine cleavage system catalyzes the degradation of glycine. The P protein binds the alpha-amino group of glycine through its pyridoxal phosphate cofactor; CO(2) is released and the remaining methylamine moiety is then transferred to the lipoamide cofactor of the H protein.</text>
</comment>
<comment type="catalytic activity">
    <reaction evidence="1">
        <text>N(6)-[(R)-lipoyl]-L-lysyl-[glycine-cleavage complex H protein] + glycine + H(+) = N(6)-[(R)-S(8)-aminomethyldihydrolipoyl]-L-lysyl-[glycine-cleavage complex H protein] + CO2</text>
        <dbReference type="Rhea" id="RHEA:24304"/>
        <dbReference type="Rhea" id="RHEA-COMP:10494"/>
        <dbReference type="Rhea" id="RHEA-COMP:10495"/>
        <dbReference type="ChEBI" id="CHEBI:15378"/>
        <dbReference type="ChEBI" id="CHEBI:16526"/>
        <dbReference type="ChEBI" id="CHEBI:57305"/>
        <dbReference type="ChEBI" id="CHEBI:83099"/>
        <dbReference type="ChEBI" id="CHEBI:83143"/>
        <dbReference type="EC" id="1.4.4.2"/>
    </reaction>
</comment>
<comment type="subunit">
    <text evidence="1">The glycine cleavage system is composed of four proteins: P, T, L and H. In this organism, the P 'protein' is a heterodimer of two subunits.</text>
</comment>
<comment type="similarity">
    <text evidence="1">Belongs to the GcvP family. N-terminal subunit subfamily.</text>
</comment>
<gene>
    <name evidence="1" type="primary">gcvPA</name>
    <name type="ordered locus">pc0283</name>
</gene>
<keyword id="KW-0560">Oxidoreductase</keyword>
<keyword id="KW-1185">Reference proteome</keyword>
<feature type="chain" id="PRO_1000045673" description="Probable glycine dehydrogenase (decarboxylating) subunit 1">
    <location>
        <begin position="1"/>
        <end position="446"/>
    </location>
</feature>
<proteinExistence type="inferred from homology"/>
<name>GCSPA_PARUW</name>
<evidence type="ECO:0000255" key="1">
    <source>
        <dbReference type="HAMAP-Rule" id="MF_00712"/>
    </source>
</evidence>
<sequence>MDFISNKTPQIEAMLTEIGIQNVEELFKSIPSSLILQAPSVDDGLSEYEGIQLIESLAVRNTFPNLVSYLGAGAYEHHIPALVGAVCSKSEFLTAYTPYQAEASQGMLQIIFEFQSAICALTGMDVANASVYDGASACAEAILMSLRHHKTRRQILLSDSLHPHYKKVIEQYLKSQDCELITVPFLQEGTLDASFLKMYLNDQTAAILLQSPNFFGCIEDVQPITEMAKSQGALTILCANPISYGLLSSAKELGVDIAVGDCQPFGLSLSFGGPYAGYMACKQELMRQLPGRIVGETLDVQGSRGFVLTLQAREQHIRREKATSNICTNQALAALASLVAMLWYGKEGVKELALTNYQRANYLKFHLGKISTINVWNQGASFNEFVVDFKQDSNQVLEFFRLNGIEPGIELKRYYPSLKTCLLIAVTETKNQIQLDQFIKVCKELF</sequence>
<reference key="1">
    <citation type="journal article" date="2004" name="Science">
        <title>Illuminating the evolutionary history of chlamydiae.</title>
        <authorList>
            <person name="Horn M."/>
            <person name="Collingro A."/>
            <person name="Schmitz-Esser S."/>
            <person name="Beier C.L."/>
            <person name="Purkhold U."/>
            <person name="Fartmann B."/>
            <person name="Brandt P."/>
            <person name="Nyakatura G.J."/>
            <person name="Droege M."/>
            <person name="Frishman D."/>
            <person name="Rattei T."/>
            <person name="Mewes H.-W."/>
            <person name="Wagner M."/>
        </authorList>
    </citation>
    <scope>NUCLEOTIDE SEQUENCE [LARGE SCALE GENOMIC DNA]</scope>
    <source>
        <strain>UWE25</strain>
    </source>
</reference>